<evidence type="ECO:0000255" key="1">
    <source>
        <dbReference type="HAMAP-Rule" id="MF_00523"/>
    </source>
</evidence>
<accession>Q5NZG5</accession>
<proteinExistence type="inferred from homology"/>
<sequence>MFRLDELVERLGGELLGDPATAVRRVATLEQAGEGDLAFLANPKYQSRLAACGASAVILAPAARDLTGLPRIVTADPYIYFARVAQLFNPPEAFVPGVHPAASVASPVPASVTIAAGASIDVDVELGEHVVIGPGCRIGRGARIGAGSRLNANVTIYHDCVLGRDCIVHAGAVIGADGFGFARERDGSWVKIPQVGRVVIGDDVEIGANTTIDRGALDDTVISGGVKLDNQIQIGHNVRIGAHTAIAGCVGIAGSTTIGARCMIGGQAGIIGHLEIVDDVVVSAGTLVTKSIRRPGVYTANLPVQGHAEWVKNFAHLRHLDALVDRIRALEERKAR</sequence>
<organism>
    <name type="scientific">Aromatoleum aromaticum (strain DSM 19018 / LMG 30748 / EbN1)</name>
    <name type="common">Azoarcus sp. (strain EbN1)</name>
    <dbReference type="NCBI Taxonomy" id="76114"/>
    <lineage>
        <taxon>Bacteria</taxon>
        <taxon>Pseudomonadati</taxon>
        <taxon>Pseudomonadota</taxon>
        <taxon>Betaproteobacteria</taxon>
        <taxon>Rhodocyclales</taxon>
        <taxon>Rhodocyclaceae</taxon>
        <taxon>Aromatoleum</taxon>
    </lineage>
</organism>
<name>LPXD_AROAE</name>
<reference key="1">
    <citation type="journal article" date="2005" name="Arch. Microbiol.">
        <title>The genome sequence of an anaerobic aromatic-degrading denitrifying bacterium, strain EbN1.</title>
        <authorList>
            <person name="Rabus R."/>
            <person name="Kube M."/>
            <person name="Heider J."/>
            <person name="Beck A."/>
            <person name="Heitmann K."/>
            <person name="Widdel F."/>
            <person name="Reinhardt R."/>
        </authorList>
    </citation>
    <scope>NUCLEOTIDE SEQUENCE [LARGE SCALE GENOMIC DNA]</scope>
    <source>
        <strain>DSM 19018 / LMG 30748 / EbN1</strain>
    </source>
</reference>
<keyword id="KW-0012">Acyltransferase</keyword>
<keyword id="KW-0441">Lipid A biosynthesis</keyword>
<keyword id="KW-0444">Lipid biosynthesis</keyword>
<keyword id="KW-0443">Lipid metabolism</keyword>
<keyword id="KW-1185">Reference proteome</keyword>
<keyword id="KW-0677">Repeat</keyword>
<keyword id="KW-0808">Transferase</keyword>
<protein>
    <recommendedName>
        <fullName evidence="1">UDP-3-O-acylglucosamine N-acyltransferase</fullName>
        <ecNumber evidence="1">2.3.1.191</ecNumber>
    </recommendedName>
</protein>
<comment type="function">
    <text evidence="1">Catalyzes the N-acylation of UDP-3-O-acylglucosamine using 3-hydroxyacyl-ACP as the acyl donor. Is involved in the biosynthesis of lipid A, a phosphorylated glycolipid that anchors the lipopolysaccharide to the outer membrane of the cell.</text>
</comment>
<comment type="catalytic activity">
    <reaction evidence="1">
        <text>a UDP-3-O-[(3R)-3-hydroxyacyl]-alpha-D-glucosamine + a (3R)-hydroxyacyl-[ACP] = a UDP-2-N,3-O-bis[(3R)-3-hydroxyacyl]-alpha-D-glucosamine + holo-[ACP] + H(+)</text>
        <dbReference type="Rhea" id="RHEA:53836"/>
        <dbReference type="Rhea" id="RHEA-COMP:9685"/>
        <dbReference type="Rhea" id="RHEA-COMP:9945"/>
        <dbReference type="ChEBI" id="CHEBI:15378"/>
        <dbReference type="ChEBI" id="CHEBI:64479"/>
        <dbReference type="ChEBI" id="CHEBI:78827"/>
        <dbReference type="ChEBI" id="CHEBI:137740"/>
        <dbReference type="ChEBI" id="CHEBI:137748"/>
        <dbReference type="EC" id="2.3.1.191"/>
    </reaction>
</comment>
<comment type="pathway">
    <text evidence="1">Bacterial outer membrane biogenesis; LPS lipid A biosynthesis.</text>
</comment>
<comment type="subunit">
    <text evidence="1">Homotrimer.</text>
</comment>
<comment type="similarity">
    <text evidence="1">Belongs to the transferase hexapeptide repeat family. LpxD subfamily.</text>
</comment>
<gene>
    <name evidence="1" type="primary">lpxD</name>
    <name type="ordered locus">AZOSEA34240</name>
    <name type="ORF">ebA5998</name>
</gene>
<dbReference type="EC" id="2.3.1.191" evidence="1"/>
<dbReference type="EMBL" id="CR555306">
    <property type="protein sequence ID" value="CAI09549.1"/>
    <property type="molecule type" value="Genomic_DNA"/>
</dbReference>
<dbReference type="RefSeq" id="WP_011239209.1">
    <property type="nucleotide sequence ID" value="NC_006513.1"/>
</dbReference>
<dbReference type="SMR" id="Q5NZG5"/>
<dbReference type="STRING" id="76114.ebA5998"/>
<dbReference type="KEGG" id="eba:ebA5998"/>
<dbReference type="eggNOG" id="COG1044">
    <property type="taxonomic scope" value="Bacteria"/>
</dbReference>
<dbReference type="HOGENOM" id="CLU_049865_0_1_4"/>
<dbReference type="OrthoDB" id="9784739at2"/>
<dbReference type="UniPathway" id="UPA00973"/>
<dbReference type="Proteomes" id="UP000006552">
    <property type="component" value="Chromosome"/>
</dbReference>
<dbReference type="GO" id="GO:0016020">
    <property type="term" value="C:membrane"/>
    <property type="evidence" value="ECO:0007669"/>
    <property type="project" value="GOC"/>
</dbReference>
<dbReference type="GO" id="GO:0016410">
    <property type="term" value="F:N-acyltransferase activity"/>
    <property type="evidence" value="ECO:0007669"/>
    <property type="project" value="InterPro"/>
</dbReference>
<dbReference type="GO" id="GO:0009245">
    <property type="term" value="P:lipid A biosynthetic process"/>
    <property type="evidence" value="ECO:0007669"/>
    <property type="project" value="UniProtKB-UniRule"/>
</dbReference>
<dbReference type="CDD" id="cd03352">
    <property type="entry name" value="LbH_LpxD"/>
    <property type="match status" value="1"/>
</dbReference>
<dbReference type="Gene3D" id="2.160.10.10">
    <property type="entry name" value="Hexapeptide repeat proteins"/>
    <property type="match status" value="1"/>
</dbReference>
<dbReference type="Gene3D" id="3.40.1390.10">
    <property type="entry name" value="MurE/MurF, N-terminal domain"/>
    <property type="match status" value="1"/>
</dbReference>
<dbReference type="HAMAP" id="MF_00523">
    <property type="entry name" value="LpxD"/>
    <property type="match status" value="1"/>
</dbReference>
<dbReference type="InterPro" id="IPR001451">
    <property type="entry name" value="Hexapep"/>
</dbReference>
<dbReference type="InterPro" id="IPR018357">
    <property type="entry name" value="Hexapep_transf_CS"/>
</dbReference>
<dbReference type="InterPro" id="IPR007691">
    <property type="entry name" value="LpxD"/>
</dbReference>
<dbReference type="InterPro" id="IPR011004">
    <property type="entry name" value="Trimer_LpxA-like_sf"/>
</dbReference>
<dbReference type="InterPro" id="IPR020573">
    <property type="entry name" value="UDP_GlcNAc_AcTrfase_non-rep"/>
</dbReference>
<dbReference type="NCBIfam" id="TIGR01853">
    <property type="entry name" value="lipid_A_lpxD"/>
    <property type="match status" value="1"/>
</dbReference>
<dbReference type="NCBIfam" id="NF002060">
    <property type="entry name" value="PRK00892.1"/>
    <property type="match status" value="1"/>
</dbReference>
<dbReference type="PANTHER" id="PTHR43378">
    <property type="entry name" value="UDP-3-O-ACYLGLUCOSAMINE N-ACYLTRANSFERASE"/>
    <property type="match status" value="1"/>
</dbReference>
<dbReference type="PANTHER" id="PTHR43378:SF2">
    <property type="entry name" value="UDP-3-O-ACYLGLUCOSAMINE N-ACYLTRANSFERASE 1, MITOCHONDRIAL-RELATED"/>
    <property type="match status" value="1"/>
</dbReference>
<dbReference type="Pfam" id="PF00132">
    <property type="entry name" value="Hexapep"/>
    <property type="match status" value="1"/>
</dbReference>
<dbReference type="Pfam" id="PF14602">
    <property type="entry name" value="Hexapep_2"/>
    <property type="match status" value="1"/>
</dbReference>
<dbReference type="Pfam" id="PF04613">
    <property type="entry name" value="LpxD"/>
    <property type="match status" value="1"/>
</dbReference>
<dbReference type="SUPFAM" id="SSF51161">
    <property type="entry name" value="Trimeric LpxA-like enzymes"/>
    <property type="match status" value="1"/>
</dbReference>
<dbReference type="PROSITE" id="PS00101">
    <property type="entry name" value="HEXAPEP_TRANSFERASES"/>
    <property type="match status" value="1"/>
</dbReference>
<feature type="chain" id="PRO_0000264346" description="UDP-3-O-acylglucosamine N-acyltransferase">
    <location>
        <begin position="1"/>
        <end position="336"/>
    </location>
</feature>
<feature type="active site" description="Proton acceptor" evidence="1">
    <location>
        <position position="236"/>
    </location>
</feature>